<evidence type="ECO:0000255" key="1">
    <source>
        <dbReference type="HAMAP-Rule" id="MF_01961"/>
    </source>
</evidence>
<evidence type="ECO:0000256" key="2">
    <source>
        <dbReference type="SAM" id="MobiDB-lite"/>
    </source>
</evidence>
<gene>
    <name evidence="1" type="primary">katG</name>
    <name type="ordered locus">Cag_0386</name>
</gene>
<keyword id="KW-0349">Heme</keyword>
<keyword id="KW-0376">Hydrogen peroxide</keyword>
<keyword id="KW-0408">Iron</keyword>
<keyword id="KW-0479">Metal-binding</keyword>
<keyword id="KW-0560">Oxidoreductase</keyword>
<keyword id="KW-0575">Peroxidase</keyword>
<dbReference type="EC" id="1.11.1.21" evidence="1"/>
<dbReference type="EMBL" id="CP000108">
    <property type="protein sequence ID" value="ABB27659.1"/>
    <property type="molecule type" value="Genomic_DNA"/>
</dbReference>
<dbReference type="SMR" id="Q3ATL6"/>
<dbReference type="STRING" id="340177.Cag_0386"/>
<dbReference type="PeroxiBase" id="2669">
    <property type="entry name" value="CchCP01"/>
</dbReference>
<dbReference type="KEGG" id="cch:Cag_0386"/>
<dbReference type="eggNOG" id="COG0376">
    <property type="taxonomic scope" value="Bacteria"/>
</dbReference>
<dbReference type="HOGENOM" id="CLU_025424_2_0_10"/>
<dbReference type="OrthoDB" id="9759743at2"/>
<dbReference type="GO" id="GO:0005829">
    <property type="term" value="C:cytosol"/>
    <property type="evidence" value="ECO:0007669"/>
    <property type="project" value="TreeGrafter"/>
</dbReference>
<dbReference type="GO" id="GO:0004096">
    <property type="term" value="F:catalase activity"/>
    <property type="evidence" value="ECO:0007669"/>
    <property type="project" value="UniProtKB-UniRule"/>
</dbReference>
<dbReference type="GO" id="GO:0020037">
    <property type="term" value="F:heme binding"/>
    <property type="evidence" value="ECO:0007669"/>
    <property type="project" value="InterPro"/>
</dbReference>
<dbReference type="GO" id="GO:0046872">
    <property type="term" value="F:metal ion binding"/>
    <property type="evidence" value="ECO:0007669"/>
    <property type="project" value="UniProtKB-KW"/>
</dbReference>
<dbReference type="GO" id="GO:0070301">
    <property type="term" value="P:cellular response to hydrogen peroxide"/>
    <property type="evidence" value="ECO:0007669"/>
    <property type="project" value="TreeGrafter"/>
</dbReference>
<dbReference type="GO" id="GO:0042744">
    <property type="term" value="P:hydrogen peroxide catabolic process"/>
    <property type="evidence" value="ECO:0007669"/>
    <property type="project" value="UniProtKB-KW"/>
</dbReference>
<dbReference type="CDD" id="cd00649">
    <property type="entry name" value="catalase_peroxidase_1"/>
    <property type="match status" value="1"/>
</dbReference>
<dbReference type="CDD" id="cd08200">
    <property type="entry name" value="catalase_peroxidase_2"/>
    <property type="match status" value="1"/>
</dbReference>
<dbReference type="FunFam" id="1.10.420.10:FF:000002">
    <property type="entry name" value="Catalase-peroxidase"/>
    <property type="match status" value="1"/>
</dbReference>
<dbReference type="FunFam" id="1.10.420.10:FF:000004">
    <property type="entry name" value="Catalase-peroxidase"/>
    <property type="match status" value="1"/>
</dbReference>
<dbReference type="FunFam" id="1.10.520.10:FF:000002">
    <property type="entry name" value="Catalase-peroxidase"/>
    <property type="match status" value="1"/>
</dbReference>
<dbReference type="Gene3D" id="1.10.520.10">
    <property type="match status" value="2"/>
</dbReference>
<dbReference type="Gene3D" id="1.10.420.10">
    <property type="entry name" value="Peroxidase, domain 2"/>
    <property type="match status" value="2"/>
</dbReference>
<dbReference type="HAMAP" id="MF_01961">
    <property type="entry name" value="Catal_peroxid"/>
    <property type="match status" value="1"/>
</dbReference>
<dbReference type="InterPro" id="IPR000763">
    <property type="entry name" value="Catalase_peroxidase"/>
</dbReference>
<dbReference type="InterPro" id="IPR002016">
    <property type="entry name" value="Haem_peroxidase"/>
</dbReference>
<dbReference type="InterPro" id="IPR010255">
    <property type="entry name" value="Haem_peroxidase_sf"/>
</dbReference>
<dbReference type="InterPro" id="IPR019794">
    <property type="entry name" value="Peroxidases_AS"/>
</dbReference>
<dbReference type="InterPro" id="IPR019793">
    <property type="entry name" value="Peroxidases_heam-ligand_BS"/>
</dbReference>
<dbReference type="NCBIfam" id="TIGR00198">
    <property type="entry name" value="cat_per_HPI"/>
    <property type="match status" value="1"/>
</dbReference>
<dbReference type="NCBIfam" id="NF011635">
    <property type="entry name" value="PRK15061.1"/>
    <property type="match status" value="1"/>
</dbReference>
<dbReference type="PANTHER" id="PTHR30555:SF0">
    <property type="entry name" value="CATALASE-PEROXIDASE"/>
    <property type="match status" value="1"/>
</dbReference>
<dbReference type="PANTHER" id="PTHR30555">
    <property type="entry name" value="HYDROPEROXIDASE I, BIFUNCTIONAL CATALASE-PEROXIDASE"/>
    <property type="match status" value="1"/>
</dbReference>
<dbReference type="Pfam" id="PF00141">
    <property type="entry name" value="peroxidase"/>
    <property type="match status" value="2"/>
</dbReference>
<dbReference type="PRINTS" id="PR00460">
    <property type="entry name" value="BPEROXIDASE"/>
</dbReference>
<dbReference type="PRINTS" id="PR00458">
    <property type="entry name" value="PEROXIDASE"/>
</dbReference>
<dbReference type="SUPFAM" id="SSF48113">
    <property type="entry name" value="Heme-dependent peroxidases"/>
    <property type="match status" value="2"/>
</dbReference>
<dbReference type="PROSITE" id="PS00435">
    <property type="entry name" value="PEROXIDASE_1"/>
    <property type="match status" value="1"/>
</dbReference>
<dbReference type="PROSITE" id="PS00436">
    <property type="entry name" value="PEROXIDASE_2"/>
    <property type="match status" value="1"/>
</dbReference>
<dbReference type="PROSITE" id="PS50873">
    <property type="entry name" value="PEROXIDASE_4"/>
    <property type="match status" value="1"/>
</dbReference>
<comment type="function">
    <text evidence="1">Bifunctional enzyme with both catalase and broad-spectrum peroxidase activity.</text>
</comment>
<comment type="catalytic activity">
    <reaction evidence="1">
        <text>H2O2 + AH2 = A + 2 H2O</text>
        <dbReference type="Rhea" id="RHEA:30275"/>
        <dbReference type="ChEBI" id="CHEBI:13193"/>
        <dbReference type="ChEBI" id="CHEBI:15377"/>
        <dbReference type="ChEBI" id="CHEBI:16240"/>
        <dbReference type="ChEBI" id="CHEBI:17499"/>
        <dbReference type="EC" id="1.11.1.21"/>
    </reaction>
</comment>
<comment type="catalytic activity">
    <reaction evidence="1">
        <text>2 H2O2 = O2 + 2 H2O</text>
        <dbReference type="Rhea" id="RHEA:20309"/>
        <dbReference type="ChEBI" id="CHEBI:15377"/>
        <dbReference type="ChEBI" id="CHEBI:15379"/>
        <dbReference type="ChEBI" id="CHEBI:16240"/>
        <dbReference type="EC" id="1.11.1.21"/>
    </reaction>
</comment>
<comment type="cofactor">
    <cofactor evidence="1">
        <name>heme b</name>
        <dbReference type="ChEBI" id="CHEBI:60344"/>
    </cofactor>
    <text evidence="1">Binds 1 heme b (iron(II)-protoporphyrin IX) group per dimer.</text>
</comment>
<comment type="subunit">
    <text evidence="1">Homodimer or homotetramer.</text>
</comment>
<comment type="PTM">
    <text evidence="1">Formation of the three residue Trp-Tyr-Met cross-link is important for the catalase, but not the peroxidase activity of the enzyme.</text>
</comment>
<comment type="similarity">
    <text evidence="1">Belongs to the peroxidase family. Peroxidase/catalase subfamily.</text>
</comment>
<accession>Q3ATL6</accession>
<organism>
    <name type="scientific">Chlorobium chlorochromatii (strain CaD3)</name>
    <dbReference type="NCBI Taxonomy" id="340177"/>
    <lineage>
        <taxon>Bacteria</taxon>
        <taxon>Pseudomonadati</taxon>
        <taxon>Chlorobiota</taxon>
        <taxon>Chlorobiia</taxon>
        <taxon>Chlorobiales</taxon>
        <taxon>Chlorobiaceae</taxon>
        <taxon>Chlorobium/Pelodictyon group</taxon>
        <taxon>Chlorobium</taxon>
    </lineage>
</organism>
<reference key="1">
    <citation type="submission" date="2005-08" db="EMBL/GenBank/DDBJ databases">
        <title>Complete sequence of Chlorobium chlorochromatii CaD3.</title>
        <authorList>
            <consortium name="US DOE Joint Genome Institute"/>
            <person name="Copeland A."/>
            <person name="Lucas S."/>
            <person name="Lapidus A."/>
            <person name="Barry K."/>
            <person name="Detter J.C."/>
            <person name="Glavina T."/>
            <person name="Hammon N."/>
            <person name="Israni S."/>
            <person name="Pitluck S."/>
            <person name="Bryant D."/>
            <person name="Schmutz J."/>
            <person name="Larimer F."/>
            <person name="Land M."/>
            <person name="Kyrpides N."/>
            <person name="Ivanova N."/>
            <person name="Richardson P."/>
        </authorList>
    </citation>
    <scope>NUCLEOTIDE SEQUENCE [LARGE SCALE GENOMIC DNA]</scope>
    <source>
        <strain>CaD3</strain>
    </source>
</reference>
<proteinExistence type="inferred from homology"/>
<name>KATG_CHLCH</name>
<sequence>MNEERKCPITGATHKPSAEKGRSNHDWWPNQLNLKILHQHSALSNPMDKDFNYAEEFKKLDLAAIKQDLYALMTDSQEWWPADYGHYGPLFIRMAWHSAGTYRTSDGRGGAGTGSQRFAPLNSWPDNANLDKARRLLWPIKQKYGRQISWADLMILTGNCALESMGLKTFGFAGGREDIWEPEEDIYWGTEGEWLADKRYSGERELEKPLAAVQMGLIYVNPEGPNGKPDPLAAAKDIRETFARMAMNDEETVALIAGGHTFGKTHGAGDASQVGPEPEAAGIEEQGLGWKNQYGTGKGKDTITSGLEVIWTTTPTKWSNNFFWNLFGYEWELTKSPAGAYQWTPKYGVGANTVPDAHDPSKRHAPAMMTTDLALRFDPDYEKIARRYYENPDQFADAFARAWFKLTHRDMGPRSRYRGAEVPVEELIWQDTIPALDHELIGADEIAALKATILASELSIAQLISTAWASAATFRNSDKRGGANGARLRLAPQKDWEVNQPDELQKVLQVLETIQTEFNASRNDGKKVSLADLIVLGGCAAIEAAAEKAGYKVTVPFTPGRMDATQEETDAHSFAVLEPVADGFRNYLKAKYSFSVEEMLIDKAQLLTLTAPEMTVLIGGMRVLNTNAGHTTHGVFTKRPETLSNDFFVNLLDMGTVWKATSEASDIFEGRNRSTGELQWTATRVDLVFGSNSQLRALVEVYGCKDSQEKFLNDFIAAWNKVMNLDRFDLSGL</sequence>
<protein>
    <recommendedName>
        <fullName evidence="1">Catalase-peroxidase</fullName>
        <shortName evidence="1">CP</shortName>
        <ecNumber evidence="1">1.11.1.21</ecNumber>
    </recommendedName>
    <alternativeName>
        <fullName evidence="1">Peroxidase/catalase</fullName>
    </alternativeName>
</protein>
<feature type="chain" id="PRO_0000354757" description="Catalase-peroxidase">
    <location>
        <begin position="1"/>
        <end position="733"/>
    </location>
</feature>
<feature type="region of interest" description="Disordered" evidence="2">
    <location>
        <begin position="1"/>
        <end position="25"/>
    </location>
</feature>
<feature type="compositionally biased region" description="Basic and acidic residues" evidence="2">
    <location>
        <begin position="16"/>
        <end position="25"/>
    </location>
</feature>
<feature type="active site" description="Proton acceptor" evidence="1">
    <location>
        <position position="97"/>
    </location>
</feature>
<feature type="binding site" description="axial binding residue" evidence="1">
    <location>
        <position position="260"/>
    </location>
    <ligand>
        <name>heme b</name>
        <dbReference type="ChEBI" id="CHEBI:60344"/>
    </ligand>
    <ligandPart>
        <name>Fe</name>
        <dbReference type="ChEBI" id="CHEBI:18248"/>
    </ligandPart>
</feature>
<feature type="site" description="Transition state stabilizer" evidence="1">
    <location>
        <position position="93"/>
    </location>
</feature>
<feature type="cross-link" description="Tryptophyl-tyrosyl-methioninium (Trp-Tyr) (with M-245)" evidence="1">
    <location>
        <begin position="96"/>
        <end position="219"/>
    </location>
</feature>
<feature type="cross-link" description="Tryptophyl-tyrosyl-methioninium (Tyr-Met) (with W-96)" evidence="1">
    <location>
        <begin position="219"/>
        <end position="245"/>
    </location>
</feature>